<organism>
    <name type="scientific">Oryctolagus cuniculus</name>
    <name type="common">Rabbit</name>
    <dbReference type="NCBI Taxonomy" id="9986"/>
    <lineage>
        <taxon>Eukaryota</taxon>
        <taxon>Metazoa</taxon>
        <taxon>Chordata</taxon>
        <taxon>Craniata</taxon>
        <taxon>Vertebrata</taxon>
        <taxon>Euteleostomi</taxon>
        <taxon>Mammalia</taxon>
        <taxon>Eutheria</taxon>
        <taxon>Euarchontoglires</taxon>
        <taxon>Glires</taxon>
        <taxon>Lagomorpha</taxon>
        <taxon>Leporidae</taxon>
        <taxon>Oryctolagus</taxon>
    </lineage>
</organism>
<proteinExistence type="evidence at protein level"/>
<sequence>MDPNCSCATAGDSCTCANSCTCKACKCTSCKKSCCSCCPPGCAKCAQGCICKGASDKCSCCA</sequence>
<feature type="chain" id="PRO_0000197218" description="Metallothionein-2C">
    <location>
        <begin position="1"/>
        <end position="62"/>
    </location>
</feature>
<feature type="region of interest" description="Beta">
    <location>
        <begin position="1"/>
        <end position="30"/>
    </location>
</feature>
<feature type="region of interest" description="Alpha">
    <location>
        <begin position="31"/>
        <end position="62"/>
    </location>
</feature>
<feature type="binding site" evidence="1">
    <location>
        <position position="5"/>
    </location>
    <ligand>
        <name>a divalent metal cation</name>
        <dbReference type="ChEBI" id="CHEBI:60240"/>
        <label>1</label>
        <note>in cluster B</note>
    </ligand>
</feature>
<feature type="binding site" evidence="1">
    <location>
        <position position="7"/>
    </location>
    <ligand>
        <name>a divalent metal cation</name>
        <dbReference type="ChEBI" id="CHEBI:60240"/>
        <label>1</label>
        <note>in cluster B</note>
    </ligand>
</feature>
<feature type="binding site" evidence="1">
    <location>
        <position position="7"/>
    </location>
    <ligand>
        <name>a divalent metal cation</name>
        <dbReference type="ChEBI" id="CHEBI:60240"/>
        <label>2</label>
        <note>in cluster B</note>
    </ligand>
</feature>
<feature type="binding site" evidence="1">
    <location>
        <position position="14"/>
    </location>
    <ligand>
        <name>a divalent metal cation</name>
        <dbReference type="ChEBI" id="CHEBI:60240"/>
        <label>2</label>
        <note>in cluster B</note>
    </ligand>
</feature>
<feature type="binding site" evidence="1">
    <location>
        <position position="16"/>
    </location>
    <ligand>
        <name>a divalent metal cation</name>
        <dbReference type="ChEBI" id="CHEBI:60240"/>
        <label>2</label>
        <note>in cluster B</note>
    </ligand>
</feature>
<feature type="binding site" evidence="1">
    <location>
        <position position="16"/>
    </location>
    <ligand>
        <name>a divalent metal cation</name>
        <dbReference type="ChEBI" id="CHEBI:60240"/>
        <label>3</label>
        <note>in cluster B</note>
    </ligand>
</feature>
<feature type="binding site" evidence="1">
    <location>
        <position position="20"/>
    </location>
    <ligand>
        <name>a divalent metal cation</name>
        <dbReference type="ChEBI" id="CHEBI:60240"/>
        <label>3</label>
        <note>in cluster B</note>
    </ligand>
</feature>
<feature type="binding site" evidence="1">
    <location>
        <position position="22"/>
    </location>
    <ligand>
        <name>a divalent metal cation</name>
        <dbReference type="ChEBI" id="CHEBI:60240"/>
        <label>1</label>
        <note>in cluster B</note>
    </ligand>
</feature>
<feature type="binding site" evidence="1">
    <location>
        <position position="25"/>
    </location>
    <ligand>
        <name>a divalent metal cation</name>
        <dbReference type="ChEBI" id="CHEBI:60240"/>
        <label>1</label>
        <note>in cluster B</note>
    </ligand>
</feature>
<feature type="binding site" evidence="1">
    <location>
        <position position="25"/>
    </location>
    <ligand>
        <name>a divalent metal cation</name>
        <dbReference type="ChEBI" id="CHEBI:60240"/>
        <label>3</label>
        <note>in cluster B</note>
    </ligand>
</feature>
<feature type="binding site" evidence="1">
    <location>
        <position position="27"/>
    </location>
    <ligand>
        <name>a divalent metal cation</name>
        <dbReference type="ChEBI" id="CHEBI:60240"/>
        <label>2</label>
        <note>in cluster B</note>
    </ligand>
</feature>
<feature type="binding site" evidence="1">
    <location>
        <position position="30"/>
    </location>
    <ligand>
        <name>a divalent metal cation</name>
        <dbReference type="ChEBI" id="CHEBI:60240"/>
        <label>3</label>
        <note>in cluster B</note>
    </ligand>
</feature>
<feature type="binding site" evidence="1">
    <location>
        <position position="34"/>
    </location>
    <ligand>
        <name>a divalent metal cation</name>
        <dbReference type="ChEBI" id="CHEBI:60240"/>
        <label>4</label>
        <note>in cluster A</note>
    </ligand>
</feature>
<feature type="binding site" evidence="1">
    <location>
        <position position="35"/>
    </location>
    <ligand>
        <name>a divalent metal cation</name>
        <dbReference type="ChEBI" id="CHEBI:60240"/>
        <label>4</label>
        <note>in cluster A</note>
    </ligand>
</feature>
<feature type="binding site" evidence="1">
    <location>
        <position position="35"/>
    </location>
    <ligand>
        <name>a divalent metal cation</name>
        <dbReference type="ChEBI" id="CHEBI:60240"/>
        <label>5</label>
        <note>in cluster A</note>
    </ligand>
</feature>
<feature type="binding site" evidence="1">
    <location>
        <position position="37"/>
    </location>
    <ligand>
        <name>a divalent metal cation</name>
        <dbReference type="ChEBI" id="CHEBI:60240"/>
        <label>5</label>
        <note>in cluster A</note>
    </ligand>
</feature>
<feature type="binding site" evidence="1">
    <location>
        <position position="38"/>
    </location>
    <ligand>
        <name>a divalent metal cation</name>
        <dbReference type="ChEBI" id="CHEBI:60240"/>
        <label>5</label>
        <note>in cluster A</note>
    </ligand>
</feature>
<feature type="binding site" evidence="1">
    <location>
        <position position="38"/>
    </location>
    <ligand>
        <name>a divalent metal cation</name>
        <dbReference type="ChEBI" id="CHEBI:60240"/>
        <label>6</label>
        <note>in cluster A</note>
    </ligand>
</feature>
<feature type="binding site" evidence="1">
    <location>
        <position position="42"/>
    </location>
    <ligand>
        <name>a divalent metal cation</name>
        <dbReference type="ChEBI" id="CHEBI:60240"/>
        <label>6</label>
        <note>in cluster A</note>
    </ligand>
</feature>
<feature type="binding site" evidence="1">
    <location>
        <position position="45"/>
    </location>
    <ligand>
        <name>a divalent metal cation</name>
        <dbReference type="ChEBI" id="CHEBI:60240"/>
        <label>4</label>
        <note>in cluster A</note>
    </ligand>
</feature>
<feature type="binding site" evidence="1">
    <location>
        <position position="45"/>
    </location>
    <ligand>
        <name>a divalent metal cation</name>
        <dbReference type="ChEBI" id="CHEBI:60240"/>
        <label>6</label>
        <note>in cluster A</note>
    </ligand>
</feature>
<feature type="binding site" evidence="1">
    <location>
        <position position="49"/>
    </location>
    <ligand>
        <name>a divalent metal cation</name>
        <dbReference type="ChEBI" id="CHEBI:60240"/>
        <label>4</label>
        <note>in cluster A</note>
    </ligand>
</feature>
<feature type="binding site" evidence="1">
    <location>
        <position position="51"/>
    </location>
    <ligand>
        <name>a divalent metal cation</name>
        <dbReference type="ChEBI" id="CHEBI:60240"/>
        <label>5</label>
        <note>in cluster A</note>
    </ligand>
</feature>
<feature type="binding site" evidence="1">
    <location>
        <position position="51"/>
    </location>
    <ligand>
        <name>a divalent metal cation</name>
        <dbReference type="ChEBI" id="CHEBI:60240"/>
        <label>7</label>
        <note>in cluster A</note>
    </ligand>
</feature>
<feature type="binding site" evidence="1">
    <location>
        <position position="58"/>
    </location>
    <ligand>
        <name>a divalent metal cation</name>
        <dbReference type="ChEBI" id="CHEBI:60240"/>
        <label>7</label>
        <note>in cluster A</note>
    </ligand>
</feature>
<feature type="binding site" evidence="1">
    <location>
        <position position="60"/>
    </location>
    <ligand>
        <name>a divalent metal cation</name>
        <dbReference type="ChEBI" id="CHEBI:60240"/>
        <label>7</label>
        <note>in cluster A</note>
    </ligand>
</feature>
<feature type="binding site" evidence="1">
    <location>
        <position position="61"/>
    </location>
    <ligand>
        <name>a divalent metal cation</name>
        <dbReference type="ChEBI" id="CHEBI:60240"/>
        <label>6</label>
        <note>in cluster A</note>
    </ligand>
</feature>
<feature type="binding site" evidence="1">
    <location>
        <position position="61"/>
    </location>
    <ligand>
        <name>a divalent metal cation</name>
        <dbReference type="ChEBI" id="CHEBI:60240"/>
        <label>7</label>
        <note>in cluster A</note>
    </ligand>
</feature>
<feature type="modified residue" description="N-acetylmethionine" evidence="2">
    <location>
        <position position="1"/>
    </location>
</feature>
<reference key="1">
    <citation type="journal article" date="1995" name="Biochem. J.">
        <title>Primary structures of seven metallothioneins from rabbit tissue.</title>
        <authorList>
            <person name="Hunziker P.E."/>
            <person name="Kaur P."/>
            <person name="Wan M."/>
            <person name="Kaenzig A."/>
        </authorList>
    </citation>
    <scope>PROTEIN SEQUENCE</scope>
    <scope>ACETYLATION AT MET-1</scope>
    <source>
        <strain>New Zealand white</strain>
        <tissue>Kidney</tissue>
        <tissue>Liver</tissue>
    </source>
</reference>
<dbReference type="PIR" id="A37425">
    <property type="entry name" value="A37425"/>
</dbReference>
<dbReference type="PIR" id="S54335">
    <property type="entry name" value="S54335"/>
</dbReference>
<dbReference type="BMRB" id="P80290"/>
<dbReference type="SMR" id="P80290"/>
<dbReference type="iPTMnet" id="P80290"/>
<dbReference type="InParanoid" id="P80290"/>
<dbReference type="Proteomes" id="UP000001811">
    <property type="component" value="Unplaced"/>
</dbReference>
<dbReference type="GO" id="GO:0005737">
    <property type="term" value="C:cytoplasm"/>
    <property type="evidence" value="ECO:0000250"/>
    <property type="project" value="UniProtKB"/>
</dbReference>
<dbReference type="GO" id="GO:0005634">
    <property type="term" value="C:nucleus"/>
    <property type="evidence" value="ECO:0000250"/>
    <property type="project" value="UniProtKB"/>
</dbReference>
<dbReference type="GO" id="GO:0008270">
    <property type="term" value="F:zinc ion binding"/>
    <property type="evidence" value="ECO:0000250"/>
    <property type="project" value="UniProtKB"/>
</dbReference>
<dbReference type="GO" id="GO:0071276">
    <property type="term" value="P:cellular response to cadmium ion"/>
    <property type="evidence" value="ECO:0007669"/>
    <property type="project" value="TreeGrafter"/>
</dbReference>
<dbReference type="GO" id="GO:0071280">
    <property type="term" value="P:cellular response to copper ion"/>
    <property type="evidence" value="ECO:0007669"/>
    <property type="project" value="TreeGrafter"/>
</dbReference>
<dbReference type="GO" id="GO:0071294">
    <property type="term" value="P:cellular response to zinc ion"/>
    <property type="evidence" value="ECO:0000250"/>
    <property type="project" value="UniProtKB"/>
</dbReference>
<dbReference type="GO" id="GO:0010273">
    <property type="term" value="P:detoxification of copper ion"/>
    <property type="evidence" value="ECO:0007669"/>
    <property type="project" value="TreeGrafter"/>
</dbReference>
<dbReference type="GO" id="GO:0006882">
    <property type="term" value="P:intracellular zinc ion homeostasis"/>
    <property type="evidence" value="ECO:0007669"/>
    <property type="project" value="TreeGrafter"/>
</dbReference>
<dbReference type="GO" id="GO:0045926">
    <property type="term" value="P:negative regulation of growth"/>
    <property type="evidence" value="ECO:0000250"/>
    <property type="project" value="UniProtKB"/>
</dbReference>
<dbReference type="FunFam" id="4.10.10.10:FF:000001">
    <property type="entry name" value="Metallothionein"/>
    <property type="match status" value="1"/>
</dbReference>
<dbReference type="Gene3D" id="4.10.10.10">
    <property type="entry name" value="Metallothionein Isoform II"/>
    <property type="match status" value="1"/>
</dbReference>
<dbReference type="InterPro" id="IPR017854">
    <property type="entry name" value="Metalthion_dom_sf"/>
</dbReference>
<dbReference type="InterPro" id="IPR023587">
    <property type="entry name" value="Metalthion_dom_sf_vert"/>
</dbReference>
<dbReference type="InterPro" id="IPR000006">
    <property type="entry name" value="Metalthion_vert"/>
</dbReference>
<dbReference type="InterPro" id="IPR018064">
    <property type="entry name" value="Metalthion_vert_metal_BS"/>
</dbReference>
<dbReference type="PANTHER" id="PTHR23299">
    <property type="entry name" value="METALLOTHIONEIN"/>
    <property type="match status" value="1"/>
</dbReference>
<dbReference type="PANTHER" id="PTHR23299:SF22">
    <property type="entry name" value="METALLOTHIONEIN-1G"/>
    <property type="match status" value="1"/>
</dbReference>
<dbReference type="Pfam" id="PF00131">
    <property type="entry name" value="Metallothio"/>
    <property type="match status" value="1"/>
</dbReference>
<dbReference type="PRINTS" id="PR00860">
    <property type="entry name" value="MTVERTEBRATE"/>
</dbReference>
<dbReference type="SUPFAM" id="SSF57868">
    <property type="entry name" value="Metallothionein"/>
    <property type="match status" value="1"/>
</dbReference>
<dbReference type="PROSITE" id="PS00203">
    <property type="entry name" value="METALLOTHIONEIN_VRT"/>
    <property type="match status" value="1"/>
</dbReference>
<evidence type="ECO:0000250" key="1">
    <source>
        <dbReference type="UniProtKB" id="P02795"/>
    </source>
</evidence>
<evidence type="ECO:0000269" key="2">
    <source>
    </source>
</evidence>
<evidence type="ECO:0000305" key="3"/>
<protein>
    <recommendedName>
        <fullName>Metallothionein-2C</fullName>
        <shortName>MT-2C</shortName>
    </recommendedName>
    <alternativeName>
        <fullName>Metallothionein-IIC</fullName>
        <shortName>MT-IIC</shortName>
    </alternativeName>
</protein>
<keyword id="KW-0007">Acetylation</keyword>
<keyword id="KW-0104">Cadmium</keyword>
<keyword id="KW-0186">Copper</keyword>
<keyword id="KW-0903">Direct protein sequencing</keyword>
<keyword id="KW-0479">Metal-binding</keyword>
<keyword id="KW-0480">Metal-thiolate cluster</keyword>
<keyword id="KW-1185">Reference proteome</keyword>
<keyword id="KW-0862">Zinc</keyword>
<accession>P80290</accession>
<name>MT2C_RABIT</name>
<comment type="function">
    <text>Metallothioneins have a high content of cysteine residues that bind various heavy metals; these proteins are transcriptionally regulated by both heavy metals and glucocorticoids.</text>
</comment>
<comment type="subunit">
    <text>Monomer.</text>
</comment>
<comment type="domain">
    <text>Class I metallothioneins contain 2 metal-binding domains: four divalent ions are chelated within cluster A of the alpha domain and are coordinated via cysteinyl thiolate bridges to 11 cysteine ligands. Cluster B, the corresponding region within the beta domain, can ligate three divalent ions to 9 cysteines.</text>
</comment>
<comment type="similarity">
    <text evidence="3">Belongs to the metallothionein superfamily. Type 1 family.</text>
</comment>